<reference key="1">
    <citation type="journal article" date="1997" name="J. Bacteriol.">
        <title>Complete genome sequence of Methanobacterium thermoautotrophicum deltaH: functional analysis and comparative genomics.</title>
        <authorList>
            <person name="Smith D.R."/>
            <person name="Doucette-Stamm L.A."/>
            <person name="Deloughery C."/>
            <person name="Lee H.-M."/>
            <person name="Dubois J."/>
            <person name="Aldredge T."/>
            <person name="Bashirzadeh R."/>
            <person name="Blakely D."/>
            <person name="Cook R."/>
            <person name="Gilbert K."/>
            <person name="Harrison D."/>
            <person name="Hoang L."/>
            <person name="Keagle P."/>
            <person name="Lumm W."/>
            <person name="Pothier B."/>
            <person name="Qiu D."/>
            <person name="Spadafora R."/>
            <person name="Vicare R."/>
            <person name="Wang Y."/>
            <person name="Wierzbowski J."/>
            <person name="Gibson R."/>
            <person name="Jiwani N."/>
            <person name="Caruso A."/>
            <person name="Bush D."/>
            <person name="Safer H."/>
            <person name="Patwell D."/>
            <person name="Prabhakar S."/>
            <person name="McDougall S."/>
            <person name="Shimer G."/>
            <person name="Goyal A."/>
            <person name="Pietrovski S."/>
            <person name="Church G.M."/>
            <person name="Daniels C.J."/>
            <person name="Mao J.-I."/>
            <person name="Rice P."/>
            <person name="Noelling J."/>
            <person name="Reeve J.N."/>
        </authorList>
    </citation>
    <scope>NUCLEOTIDE SEQUENCE [LARGE SCALE GENOMIC DNA]</scope>
    <source>
        <strain>ATCC 29096 / DSM 1053 / JCM 10044 / NBRC 100330 / Delta H</strain>
    </source>
</reference>
<feature type="chain" id="PRO_0000153020" description="Probable GTP 3',8-cyclase">
    <location>
        <begin position="1"/>
        <end position="305"/>
    </location>
</feature>
<feature type="domain" description="Radical SAM core" evidence="2">
    <location>
        <begin position="6"/>
        <end position="233"/>
    </location>
</feature>
<feature type="binding site" evidence="1">
    <location>
        <position position="15"/>
    </location>
    <ligand>
        <name>GTP</name>
        <dbReference type="ChEBI" id="CHEBI:37565"/>
    </ligand>
</feature>
<feature type="binding site" evidence="1">
    <location>
        <position position="22"/>
    </location>
    <ligand>
        <name>[4Fe-4S] cluster</name>
        <dbReference type="ChEBI" id="CHEBI:49883"/>
        <label>1</label>
        <note>4Fe-4S-S-AdoMet</note>
    </ligand>
</feature>
<feature type="binding site" evidence="1">
    <location>
        <position position="26"/>
    </location>
    <ligand>
        <name>[4Fe-4S] cluster</name>
        <dbReference type="ChEBI" id="CHEBI:49883"/>
        <label>1</label>
        <note>4Fe-4S-S-AdoMet</note>
    </ligand>
</feature>
<feature type="binding site" evidence="1">
    <location>
        <position position="28"/>
    </location>
    <ligand>
        <name>S-adenosyl-L-methionine</name>
        <dbReference type="ChEBI" id="CHEBI:59789"/>
    </ligand>
</feature>
<feature type="binding site" evidence="1">
    <location>
        <position position="29"/>
    </location>
    <ligand>
        <name>[4Fe-4S] cluster</name>
        <dbReference type="ChEBI" id="CHEBI:49883"/>
        <label>1</label>
        <note>4Fe-4S-S-AdoMet</note>
    </ligand>
</feature>
<feature type="binding site" evidence="1">
    <location>
        <position position="62"/>
    </location>
    <ligand>
        <name>GTP</name>
        <dbReference type="ChEBI" id="CHEBI:37565"/>
    </ligand>
</feature>
<feature type="binding site" evidence="1">
    <location>
        <position position="66"/>
    </location>
    <ligand>
        <name>S-adenosyl-L-methionine</name>
        <dbReference type="ChEBI" id="CHEBI:59789"/>
    </ligand>
</feature>
<feature type="binding site" evidence="1">
    <location>
        <position position="92"/>
    </location>
    <ligand>
        <name>GTP</name>
        <dbReference type="ChEBI" id="CHEBI:37565"/>
    </ligand>
</feature>
<feature type="binding site" evidence="1">
    <location>
        <position position="116"/>
    </location>
    <ligand>
        <name>S-adenosyl-L-methionine</name>
        <dbReference type="ChEBI" id="CHEBI:59789"/>
    </ligand>
</feature>
<feature type="binding site" evidence="1">
    <location>
        <position position="153"/>
    </location>
    <ligand>
        <name>GTP</name>
        <dbReference type="ChEBI" id="CHEBI:37565"/>
    </ligand>
</feature>
<feature type="binding site" evidence="1">
    <location>
        <position position="249"/>
    </location>
    <ligand>
        <name>[4Fe-4S] cluster</name>
        <dbReference type="ChEBI" id="CHEBI:49883"/>
        <label>2</label>
        <note>4Fe-4S-substrate</note>
    </ligand>
</feature>
<feature type="binding site" evidence="1">
    <location>
        <position position="252"/>
    </location>
    <ligand>
        <name>[4Fe-4S] cluster</name>
        <dbReference type="ChEBI" id="CHEBI:49883"/>
        <label>2</label>
        <note>4Fe-4S-substrate</note>
    </ligand>
</feature>
<feature type="binding site" evidence="1">
    <location>
        <begin position="254"/>
        <end position="256"/>
    </location>
    <ligand>
        <name>GTP</name>
        <dbReference type="ChEBI" id="CHEBI:37565"/>
    </ligand>
</feature>
<feature type="binding site" evidence="1">
    <location>
        <position position="266"/>
    </location>
    <ligand>
        <name>[4Fe-4S] cluster</name>
        <dbReference type="ChEBI" id="CHEBI:49883"/>
        <label>2</label>
        <note>4Fe-4S-substrate</note>
    </ligand>
</feature>
<gene>
    <name evidence="1" type="primary">moaA</name>
    <name type="ordered locus">MTH_1550</name>
</gene>
<dbReference type="EC" id="4.1.99.22" evidence="1"/>
<dbReference type="EMBL" id="AE000666">
    <property type="protein sequence ID" value="AAB86024.1"/>
    <property type="status" value="ALT_INIT"/>
    <property type="molecule type" value="Genomic_DNA"/>
</dbReference>
<dbReference type="PIR" id="H69073">
    <property type="entry name" value="H69073"/>
</dbReference>
<dbReference type="RefSeq" id="WP_048061083.1">
    <property type="nucleotide sequence ID" value="NC_000916.1"/>
</dbReference>
<dbReference type="SMR" id="O27593"/>
<dbReference type="FunCoup" id="O27593">
    <property type="interactions" value="128"/>
</dbReference>
<dbReference type="STRING" id="187420.MTH_1550"/>
<dbReference type="PaxDb" id="187420-MTH_1550"/>
<dbReference type="EnsemblBacteria" id="AAB86024">
    <property type="protein sequence ID" value="AAB86024"/>
    <property type="gene ID" value="MTH_1550"/>
</dbReference>
<dbReference type="GeneID" id="1471819"/>
<dbReference type="GeneID" id="77402070"/>
<dbReference type="KEGG" id="mth:MTH_1550"/>
<dbReference type="PATRIC" id="fig|187420.15.peg.1513"/>
<dbReference type="HOGENOM" id="CLU_009273_0_1_2"/>
<dbReference type="InParanoid" id="O27593"/>
<dbReference type="UniPathway" id="UPA00344"/>
<dbReference type="Proteomes" id="UP000005223">
    <property type="component" value="Chromosome"/>
</dbReference>
<dbReference type="GO" id="GO:0051539">
    <property type="term" value="F:4 iron, 4 sulfur cluster binding"/>
    <property type="evidence" value="ECO:0007669"/>
    <property type="project" value="UniProtKB-UniRule"/>
</dbReference>
<dbReference type="GO" id="GO:0061799">
    <property type="term" value="F:cyclic pyranopterin monophosphate synthase activity"/>
    <property type="evidence" value="ECO:0007669"/>
    <property type="project" value="TreeGrafter"/>
</dbReference>
<dbReference type="GO" id="GO:0061798">
    <property type="term" value="F:GTP 3',8'-cyclase activity"/>
    <property type="evidence" value="ECO:0007669"/>
    <property type="project" value="UniProtKB-UniRule"/>
</dbReference>
<dbReference type="GO" id="GO:0005525">
    <property type="term" value="F:GTP binding"/>
    <property type="evidence" value="ECO:0007669"/>
    <property type="project" value="UniProtKB-UniRule"/>
</dbReference>
<dbReference type="GO" id="GO:0046872">
    <property type="term" value="F:metal ion binding"/>
    <property type="evidence" value="ECO:0007669"/>
    <property type="project" value="UniProtKB-KW"/>
</dbReference>
<dbReference type="GO" id="GO:1904047">
    <property type="term" value="F:S-adenosyl-L-methionine binding"/>
    <property type="evidence" value="ECO:0007669"/>
    <property type="project" value="UniProtKB-UniRule"/>
</dbReference>
<dbReference type="GO" id="GO:0006777">
    <property type="term" value="P:Mo-molybdopterin cofactor biosynthetic process"/>
    <property type="evidence" value="ECO:0007669"/>
    <property type="project" value="UniProtKB-UniRule"/>
</dbReference>
<dbReference type="CDD" id="cd01335">
    <property type="entry name" value="Radical_SAM"/>
    <property type="match status" value="1"/>
</dbReference>
<dbReference type="CDD" id="cd21117">
    <property type="entry name" value="Twitch_MoaA"/>
    <property type="match status" value="1"/>
</dbReference>
<dbReference type="Gene3D" id="3.20.20.70">
    <property type="entry name" value="Aldolase class I"/>
    <property type="match status" value="1"/>
</dbReference>
<dbReference type="HAMAP" id="MF_01225_A">
    <property type="entry name" value="MoaA_A"/>
    <property type="match status" value="1"/>
</dbReference>
<dbReference type="InterPro" id="IPR013785">
    <property type="entry name" value="Aldolase_TIM"/>
</dbReference>
<dbReference type="InterPro" id="IPR006638">
    <property type="entry name" value="Elp3/MiaA/NifB-like_rSAM"/>
</dbReference>
<dbReference type="InterPro" id="IPR013485">
    <property type="entry name" value="MoaA_arc"/>
</dbReference>
<dbReference type="InterPro" id="IPR000385">
    <property type="entry name" value="MoaA_NifB_PqqE_Fe-S-bd_CS"/>
</dbReference>
<dbReference type="InterPro" id="IPR010505">
    <property type="entry name" value="MoaA_twitch"/>
</dbReference>
<dbReference type="InterPro" id="IPR050105">
    <property type="entry name" value="MoCo_biosynth_MoaA/MoaC"/>
</dbReference>
<dbReference type="InterPro" id="IPR007197">
    <property type="entry name" value="rSAM"/>
</dbReference>
<dbReference type="NCBIfam" id="TIGR02668">
    <property type="entry name" value="moaA_archaeal"/>
    <property type="match status" value="1"/>
</dbReference>
<dbReference type="NCBIfam" id="NF001199">
    <property type="entry name" value="PRK00164.2-1"/>
    <property type="match status" value="1"/>
</dbReference>
<dbReference type="PANTHER" id="PTHR22960:SF0">
    <property type="entry name" value="MOLYBDENUM COFACTOR BIOSYNTHESIS PROTEIN 1"/>
    <property type="match status" value="1"/>
</dbReference>
<dbReference type="PANTHER" id="PTHR22960">
    <property type="entry name" value="MOLYBDOPTERIN COFACTOR SYNTHESIS PROTEIN A"/>
    <property type="match status" value="1"/>
</dbReference>
<dbReference type="Pfam" id="PF13353">
    <property type="entry name" value="Fer4_12"/>
    <property type="match status" value="1"/>
</dbReference>
<dbReference type="Pfam" id="PF06463">
    <property type="entry name" value="Mob_synth_C"/>
    <property type="match status" value="1"/>
</dbReference>
<dbReference type="Pfam" id="PF04055">
    <property type="entry name" value="Radical_SAM"/>
    <property type="match status" value="1"/>
</dbReference>
<dbReference type="SFLD" id="SFLDG01383">
    <property type="entry name" value="cyclic_pyranopterin_phosphate"/>
    <property type="match status" value="1"/>
</dbReference>
<dbReference type="SFLD" id="SFLDG01072">
    <property type="entry name" value="dehydrogenase_like"/>
    <property type="match status" value="1"/>
</dbReference>
<dbReference type="SMART" id="SM00729">
    <property type="entry name" value="Elp3"/>
    <property type="match status" value="1"/>
</dbReference>
<dbReference type="SUPFAM" id="SSF102114">
    <property type="entry name" value="Radical SAM enzymes"/>
    <property type="match status" value="1"/>
</dbReference>
<dbReference type="PROSITE" id="PS01305">
    <property type="entry name" value="MOAA_NIFB_PQQE"/>
    <property type="match status" value="1"/>
</dbReference>
<dbReference type="PROSITE" id="PS51918">
    <property type="entry name" value="RADICAL_SAM"/>
    <property type="match status" value="1"/>
</dbReference>
<name>MOAA_METTH</name>
<organism>
    <name type="scientific">Methanothermobacter thermautotrophicus (strain ATCC 29096 / DSM 1053 / JCM 10044 / NBRC 100330 / Delta H)</name>
    <name type="common">Methanobacterium thermoautotrophicum</name>
    <dbReference type="NCBI Taxonomy" id="187420"/>
    <lineage>
        <taxon>Archaea</taxon>
        <taxon>Methanobacteriati</taxon>
        <taxon>Methanobacteriota</taxon>
        <taxon>Methanomada group</taxon>
        <taxon>Methanobacteria</taxon>
        <taxon>Methanobacteriales</taxon>
        <taxon>Methanobacteriaceae</taxon>
        <taxon>Methanothermobacter</taxon>
    </lineage>
</organism>
<accession>O27593</accession>
<proteinExistence type="inferred from homology"/>
<sequence length="305" mass="34859">MHVQDRHGRPVMSLRLSITGRCNVNCIYCHRDGMTSSRGELSAADIEKLCRVASDLGVGKIRLSGGEPLIRDDIVEIVERINNIGFRDISITTNGTLLEGYSAALSEAGLDRVNVSFDTLNPETYRFITRKDYLERVKSGITSAVDVGLDPVKINMVILRGVNHHEVWDMFEFCREKGAVLQIIELLKTESCHDDAVERYHCDITPIEAELAEMADRIRTRKFMQDRKKYYIDGGEIEVVRPMDNTRFCANCTRLRVTPDGKLKPCLLRNDNLVDTRDALRENDTGRLRELFFEAIRRRSPYYTP</sequence>
<comment type="function">
    <text evidence="1">Catalyzes the cyclization of GTP to (8S)-3',8-cyclo-7,8-dihydroguanosine 5'-triphosphate.</text>
</comment>
<comment type="catalytic activity">
    <reaction evidence="1">
        <text>GTP + AH2 + S-adenosyl-L-methionine = (8S)-3',8-cyclo-7,8-dihydroguanosine 5'-triphosphate + 5'-deoxyadenosine + L-methionine + A + H(+)</text>
        <dbReference type="Rhea" id="RHEA:49576"/>
        <dbReference type="ChEBI" id="CHEBI:13193"/>
        <dbReference type="ChEBI" id="CHEBI:15378"/>
        <dbReference type="ChEBI" id="CHEBI:17319"/>
        <dbReference type="ChEBI" id="CHEBI:17499"/>
        <dbReference type="ChEBI" id="CHEBI:37565"/>
        <dbReference type="ChEBI" id="CHEBI:57844"/>
        <dbReference type="ChEBI" id="CHEBI:59789"/>
        <dbReference type="ChEBI" id="CHEBI:131766"/>
        <dbReference type="EC" id="4.1.99.22"/>
    </reaction>
</comment>
<comment type="cofactor">
    <cofactor evidence="1">
        <name>[4Fe-4S] cluster</name>
        <dbReference type="ChEBI" id="CHEBI:49883"/>
    </cofactor>
    <text evidence="1">Binds 2 [4Fe-4S] clusters. Binds 1 [4Fe-4S] cluster coordinated with 3 cysteines and an exchangeable S-adenosyl-L-methionine and 1 [4Fe-4S] cluster coordinated with 3 cysteines and the GTP-derived substrate.</text>
</comment>
<comment type="pathway">
    <text evidence="1">Cofactor biosynthesis; molybdopterin biosynthesis.</text>
</comment>
<comment type="similarity">
    <text evidence="1">Belongs to the radical SAM superfamily. MoaA family.</text>
</comment>
<comment type="sequence caution" evidence="3">
    <conflict type="erroneous initiation">
        <sequence resource="EMBL-CDS" id="AAB86024"/>
    </conflict>
</comment>
<protein>
    <recommendedName>
        <fullName evidence="1">Probable GTP 3',8-cyclase</fullName>
        <ecNumber evidence="1">4.1.99.22</ecNumber>
    </recommendedName>
    <alternativeName>
        <fullName evidence="1">Molybdenum cofactor biosynthesis protein A</fullName>
    </alternativeName>
</protein>
<keyword id="KW-0004">4Fe-4S</keyword>
<keyword id="KW-0342">GTP-binding</keyword>
<keyword id="KW-0408">Iron</keyword>
<keyword id="KW-0411">Iron-sulfur</keyword>
<keyword id="KW-0456">Lyase</keyword>
<keyword id="KW-0479">Metal-binding</keyword>
<keyword id="KW-0501">Molybdenum cofactor biosynthesis</keyword>
<keyword id="KW-0547">Nucleotide-binding</keyword>
<keyword id="KW-1185">Reference proteome</keyword>
<keyword id="KW-0949">S-adenosyl-L-methionine</keyword>
<evidence type="ECO:0000255" key="1">
    <source>
        <dbReference type="HAMAP-Rule" id="MF_01225"/>
    </source>
</evidence>
<evidence type="ECO:0000255" key="2">
    <source>
        <dbReference type="PROSITE-ProRule" id="PRU01266"/>
    </source>
</evidence>
<evidence type="ECO:0000305" key="3"/>